<reference key="1">
    <citation type="journal article" date="1995" name="Nat. Genet.">
        <title>Analysis of the nucleotide sequence of chromosome VI from Saccharomyces cerevisiae.</title>
        <authorList>
            <person name="Murakami Y."/>
            <person name="Naitou M."/>
            <person name="Hagiwara H."/>
            <person name="Shibata T."/>
            <person name="Ozawa M."/>
            <person name="Sasanuma S."/>
            <person name="Sasanuma M."/>
            <person name="Tsuchiya Y."/>
            <person name="Soeda E."/>
            <person name="Yokoyama K."/>
            <person name="Yamazaki M."/>
            <person name="Tashiro H."/>
            <person name="Eki T."/>
        </authorList>
    </citation>
    <scope>NUCLEOTIDE SEQUENCE [LARGE SCALE GENOMIC DNA]</scope>
    <source>
        <strain>ATCC 204508 / S288c</strain>
    </source>
</reference>
<reference key="2">
    <citation type="journal article" date="2014" name="G3 (Bethesda)">
        <title>The reference genome sequence of Saccharomyces cerevisiae: Then and now.</title>
        <authorList>
            <person name="Engel S.R."/>
            <person name="Dietrich F.S."/>
            <person name="Fisk D.G."/>
            <person name="Binkley G."/>
            <person name="Balakrishnan R."/>
            <person name="Costanzo M.C."/>
            <person name="Dwight S.S."/>
            <person name="Hitz B.C."/>
            <person name="Karra K."/>
            <person name="Nash R.S."/>
            <person name="Weng S."/>
            <person name="Wong E.D."/>
            <person name="Lloyd P."/>
            <person name="Skrzypek M.S."/>
            <person name="Miyasato S.R."/>
            <person name="Simison M."/>
            <person name="Cherry J.M."/>
        </authorList>
    </citation>
    <scope>GENOME REANNOTATION</scope>
    <source>
        <strain>ATCC 204508 / S288c</strain>
    </source>
</reference>
<organism>
    <name type="scientific">Saccharomyces cerevisiae (strain ATCC 204508 / S288c)</name>
    <name type="common">Baker's yeast</name>
    <dbReference type="NCBI Taxonomy" id="559292"/>
    <lineage>
        <taxon>Eukaryota</taxon>
        <taxon>Fungi</taxon>
        <taxon>Dikarya</taxon>
        <taxon>Ascomycota</taxon>
        <taxon>Saccharomycotina</taxon>
        <taxon>Saccharomycetes</taxon>
        <taxon>Saccharomycetales</taxon>
        <taxon>Saccharomycetaceae</taxon>
        <taxon>Saccharomyces</taxon>
    </lineage>
</organism>
<protein>
    <recommendedName>
        <fullName evidence="2">Putative uncharacterized membrane protein YFL021C-A</fullName>
    </recommendedName>
</protein>
<comment type="subcellular location">
    <subcellularLocation>
        <location evidence="1">Membrane</location>
        <topology evidence="1">Multi-pass membrane protein</topology>
    </subcellularLocation>
</comment>
<comment type="miscellaneous">
    <text evidence="2">Partially overlaps GAT1.</text>
</comment>
<comment type="caution">
    <text evidence="3">Product of a dubious gene prediction unlikely to encode a functional protein. Because of that it is not part of the S.cerevisiae S288c complete/reference proteome set.</text>
</comment>
<feature type="chain" id="PRO_0000431011" description="Putative uncharacterized membrane protein YFL021C-A">
    <location>
        <begin position="1"/>
        <end position="284"/>
    </location>
</feature>
<feature type="transmembrane region" description="Helical; Name=1" evidence="1">
    <location>
        <begin position="174"/>
        <end position="194"/>
    </location>
</feature>
<feature type="transmembrane region" description="Helical; Name=2" evidence="1">
    <location>
        <begin position="217"/>
        <end position="237"/>
    </location>
</feature>
<feature type="transmembrane region" description="Helical; Name=3" evidence="1">
    <location>
        <begin position="241"/>
        <end position="261"/>
    </location>
</feature>
<name>YF021_YEAST</name>
<sequence>MLLLFKNGKLLVKIKWSSKEDEQEVSRKLGKPEALCEARWEALSMSLSRSECTMECVSTSSSSSSSSNTFSKTEDPLRFMSERKNCWLSVSVSSRSLLPGPAAFTPLAKGEAEKSIIELECCIMRLIRWKDVRLCKRQERFKIRLESGNIFWALEYRSQISLFKFKSGSRFGTLFVLIVMFTTVHRVQCIYISIYIYAHAMNRTGEGRKSKGKKTCMLIPGPGVAHTYIYVAGPGTASVRLIVLLLLLLCIVVAVNTSGSCTGTNTMLRCFTSFCYVSACGRTQ</sequence>
<keyword id="KW-0472">Membrane</keyword>
<keyword id="KW-0812">Transmembrane</keyword>
<keyword id="KW-1133">Transmembrane helix</keyword>
<gene>
    <name evidence="4" type="ordered locus">YFL021C-A</name>
</gene>
<accession>A0A023PXK7</accession>
<proteinExistence type="uncertain"/>
<evidence type="ECO:0000255" key="1"/>
<evidence type="ECO:0000305" key="2"/>
<evidence type="ECO:0000305" key="3">
    <source>
    </source>
</evidence>
<evidence type="ECO:0000312" key="4">
    <source>
        <dbReference type="SGD" id="S000028766"/>
    </source>
</evidence>
<dbReference type="EMBL" id="KJ412247">
    <property type="protein sequence ID" value="AHX39290.1"/>
    <property type="molecule type" value="Genomic_DNA"/>
</dbReference>
<dbReference type="PaxDb" id="4932-YFL021C-A"/>
<dbReference type="EnsemblFungi" id="YFL021C-A_mRNA">
    <property type="protein sequence ID" value="YFL021C-A"/>
    <property type="gene ID" value="YFL021C-A"/>
</dbReference>
<dbReference type="AGR" id="SGD:S000028766"/>
<dbReference type="SGD" id="S000028766">
    <property type="gene designation" value="YFL021C-A"/>
</dbReference>
<dbReference type="HOGENOM" id="CLU_980726_0_0_1"/>
<dbReference type="GO" id="GO:0016020">
    <property type="term" value="C:membrane"/>
    <property type="evidence" value="ECO:0007669"/>
    <property type="project" value="UniProtKB-SubCell"/>
</dbReference>